<feature type="chain" id="PRO_1000096976" description="3-methyl-2-oxobutanoate hydroxymethyltransferase">
    <location>
        <begin position="1"/>
        <end position="272"/>
    </location>
</feature>
<feature type="active site" description="Proton acceptor" evidence="1">
    <location>
        <position position="190"/>
    </location>
</feature>
<feature type="binding site" evidence="1">
    <location>
        <begin position="54"/>
        <end position="55"/>
    </location>
    <ligand>
        <name>3-methyl-2-oxobutanoate</name>
        <dbReference type="ChEBI" id="CHEBI:11851"/>
    </ligand>
</feature>
<feature type="binding site" evidence="1">
    <location>
        <position position="54"/>
    </location>
    <ligand>
        <name>Mg(2+)</name>
        <dbReference type="ChEBI" id="CHEBI:18420"/>
    </ligand>
</feature>
<feature type="binding site" evidence="1">
    <location>
        <position position="93"/>
    </location>
    <ligand>
        <name>3-methyl-2-oxobutanoate</name>
        <dbReference type="ChEBI" id="CHEBI:11851"/>
    </ligand>
</feature>
<feature type="binding site" evidence="1">
    <location>
        <position position="93"/>
    </location>
    <ligand>
        <name>Mg(2+)</name>
        <dbReference type="ChEBI" id="CHEBI:18420"/>
    </ligand>
</feature>
<feature type="binding site" evidence="1">
    <location>
        <position position="121"/>
    </location>
    <ligand>
        <name>3-methyl-2-oxobutanoate</name>
        <dbReference type="ChEBI" id="CHEBI:11851"/>
    </ligand>
</feature>
<feature type="binding site" evidence="1">
    <location>
        <position position="123"/>
    </location>
    <ligand>
        <name>Mg(2+)</name>
        <dbReference type="ChEBI" id="CHEBI:18420"/>
    </ligand>
</feature>
<accession>A6T221</accession>
<name>PANB_JANMA</name>
<proteinExistence type="inferred from homology"/>
<reference key="1">
    <citation type="journal article" date="2007" name="PLoS Genet.">
        <title>Genome analysis of Minibacterium massiliensis highlights the convergent evolution of water-living bacteria.</title>
        <authorList>
            <person name="Audic S."/>
            <person name="Robert C."/>
            <person name="Campagna B."/>
            <person name="Parinello H."/>
            <person name="Claverie J.-M."/>
            <person name="Raoult D."/>
            <person name="Drancourt M."/>
        </authorList>
    </citation>
    <scope>NUCLEOTIDE SEQUENCE [LARGE SCALE GENOMIC DNA]</scope>
    <source>
        <strain>Marseille</strain>
    </source>
</reference>
<protein>
    <recommendedName>
        <fullName evidence="1">3-methyl-2-oxobutanoate hydroxymethyltransferase</fullName>
        <ecNumber evidence="1">2.1.2.11</ecNumber>
    </recommendedName>
    <alternativeName>
        <fullName evidence="1">Ketopantoate hydroxymethyltransferase</fullName>
        <shortName evidence="1">KPHMT</shortName>
    </alternativeName>
</protein>
<dbReference type="EC" id="2.1.2.11" evidence="1"/>
<dbReference type="EMBL" id="CP000269">
    <property type="protein sequence ID" value="ABR88643.1"/>
    <property type="molecule type" value="Genomic_DNA"/>
</dbReference>
<dbReference type="RefSeq" id="WP_012080727.1">
    <property type="nucleotide sequence ID" value="NC_009659.1"/>
</dbReference>
<dbReference type="SMR" id="A6T221"/>
<dbReference type="STRING" id="375286.mma_2878"/>
<dbReference type="KEGG" id="mms:mma_2878"/>
<dbReference type="eggNOG" id="COG0413">
    <property type="taxonomic scope" value="Bacteria"/>
</dbReference>
<dbReference type="HOGENOM" id="CLU_036645_1_0_4"/>
<dbReference type="OrthoDB" id="9781789at2"/>
<dbReference type="UniPathway" id="UPA00028">
    <property type="reaction ID" value="UER00003"/>
</dbReference>
<dbReference type="Proteomes" id="UP000006388">
    <property type="component" value="Chromosome"/>
</dbReference>
<dbReference type="GO" id="GO:0005737">
    <property type="term" value="C:cytoplasm"/>
    <property type="evidence" value="ECO:0007669"/>
    <property type="project" value="UniProtKB-SubCell"/>
</dbReference>
<dbReference type="GO" id="GO:0003864">
    <property type="term" value="F:3-methyl-2-oxobutanoate hydroxymethyltransferase activity"/>
    <property type="evidence" value="ECO:0007669"/>
    <property type="project" value="UniProtKB-UniRule"/>
</dbReference>
<dbReference type="GO" id="GO:0000287">
    <property type="term" value="F:magnesium ion binding"/>
    <property type="evidence" value="ECO:0007669"/>
    <property type="project" value="TreeGrafter"/>
</dbReference>
<dbReference type="GO" id="GO:0015940">
    <property type="term" value="P:pantothenate biosynthetic process"/>
    <property type="evidence" value="ECO:0007669"/>
    <property type="project" value="UniProtKB-UniRule"/>
</dbReference>
<dbReference type="CDD" id="cd06557">
    <property type="entry name" value="KPHMT-like"/>
    <property type="match status" value="1"/>
</dbReference>
<dbReference type="FunFam" id="3.20.20.60:FF:000003">
    <property type="entry name" value="3-methyl-2-oxobutanoate hydroxymethyltransferase"/>
    <property type="match status" value="1"/>
</dbReference>
<dbReference type="Gene3D" id="3.20.20.60">
    <property type="entry name" value="Phosphoenolpyruvate-binding domains"/>
    <property type="match status" value="1"/>
</dbReference>
<dbReference type="HAMAP" id="MF_00156">
    <property type="entry name" value="PanB"/>
    <property type="match status" value="1"/>
</dbReference>
<dbReference type="InterPro" id="IPR003700">
    <property type="entry name" value="Pantoate_hydroxy_MeTrfase"/>
</dbReference>
<dbReference type="InterPro" id="IPR015813">
    <property type="entry name" value="Pyrv/PenolPyrv_kinase-like_dom"/>
</dbReference>
<dbReference type="InterPro" id="IPR040442">
    <property type="entry name" value="Pyrv_kinase-like_dom_sf"/>
</dbReference>
<dbReference type="NCBIfam" id="TIGR00222">
    <property type="entry name" value="panB"/>
    <property type="match status" value="1"/>
</dbReference>
<dbReference type="NCBIfam" id="NF001452">
    <property type="entry name" value="PRK00311.1"/>
    <property type="match status" value="1"/>
</dbReference>
<dbReference type="PANTHER" id="PTHR20881">
    <property type="entry name" value="3-METHYL-2-OXOBUTANOATE HYDROXYMETHYLTRANSFERASE"/>
    <property type="match status" value="1"/>
</dbReference>
<dbReference type="PANTHER" id="PTHR20881:SF0">
    <property type="entry name" value="3-METHYL-2-OXOBUTANOATE HYDROXYMETHYLTRANSFERASE"/>
    <property type="match status" value="1"/>
</dbReference>
<dbReference type="Pfam" id="PF02548">
    <property type="entry name" value="Pantoate_transf"/>
    <property type="match status" value="1"/>
</dbReference>
<dbReference type="PIRSF" id="PIRSF000388">
    <property type="entry name" value="Pantoate_hydroxy_MeTrfase"/>
    <property type="match status" value="1"/>
</dbReference>
<dbReference type="SUPFAM" id="SSF51621">
    <property type="entry name" value="Phosphoenolpyruvate/pyruvate domain"/>
    <property type="match status" value="1"/>
</dbReference>
<gene>
    <name evidence="1" type="primary">panB</name>
    <name type="ordered locus">mma_2878</name>
</gene>
<sequence length="272" mass="29258">MSSYLQEARTKAVTIPSLLAMKERGEKITMLTAYDASFASMMDTCGVEMILIGDSLGMVCQGHNSTLPVTIEDVAYHTACVARGSKTAFVMSDMPFGSYATKEEAFKNAVKLVQAGAQMVKIEGGAWMADTVRFLTERAIPVMVHLGLTPQFVHQFGGYKVQGKTAEAAEKMKSEALLLQEAGADMLLLEAIPASLGKELTELVKMPTIGIGAGPDCSGQVLVLHDYINVFPGKKARFVRNFMEGQTSIEGATRAYVAAVKDGSFPAPEHCF</sequence>
<evidence type="ECO:0000255" key="1">
    <source>
        <dbReference type="HAMAP-Rule" id="MF_00156"/>
    </source>
</evidence>
<keyword id="KW-0963">Cytoplasm</keyword>
<keyword id="KW-0460">Magnesium</keyword>
<keyword id="KW-0479">Metal-binding</keyword>
<keyword id="KW-0566">Pantothenate biosynthesis</keyword>
<keyword id="KW-0808">Transferase</keyword>
<organism>
    <name type="scientific">Janthinobacterium sp. (strain Marseille)</name>
    <name type="common">Minibacterium massiliensis</name>
    <dbReference type="NCBI Taxonomy" id="375286"/>
    <lineage>
        <taxon>Bacteria</taxon>
        <taxon>Pseudomonadati</taxon>
        <taxon>Pseudomonadota</taxon>
        <taxon>Betaproteobacteria</taxon>
        <taxon>Burkholderiales</taxon>
        <taxon>Oxalobacteraceae</taxon>
        <taxon>Janthinobacterium</taxon>
    </lineage>
</organism>
<comment type="function">
    <text evidence="1">Catalyzes the reversible reaction in which hydroxymethyl group from 5,10-methylenetetrahydrofolate is transferred onto alpha-ketoisovalerate to form ketopantoate.</text>
</comment>
<comment type="catalytic activity">
    <reaction evidence="1">
        <text>3-methyl-2-oxobutanoate + (6R)-5,10-methylene-5,6,7,8-tetrahydrofolate + H2O = 2-dehydropantoate + (6S)-5,6,7,8-tetrahydrofolate</text>
        <dbReference type="Rhea" id="RHEA:11824"/>
        <dbReference type="ChEBI" id="CHEBI:11561"/>
        <dbReference type="ChEBI" id="CHEBI:11851"/>
        <dbReference type="ChEBI" id="CHEBI:15377"/>
        <dbReference type="ChEBI" id="CHEBI:15636"/>
        <dbReference type="ChEBI" id="CHEBI:57453"/>
        <dbReference type="EC" id="2.1.2.11"/>
    </reaction>
</comment>
<comment type="cofactor">
    <cofactor evidence="1">
        <name>Mg(2+)</name>
        <dbReference type="ChEBI" id="CHEBI:18420"/>
    </cofactor>
    <text evidence="1">Binds 1 Mg(2+) ion per subunit.</text>
</comment>
<comment type="pathway">
    <text evidence="1">Cofactor biosynthesis; (R)-pantothenate biosynthesis; (R)-pantoate from 3-methyl-2-oxobutanoate: step 1/2.</text>
</comment>
<comment type="subunit">
    <text evidence="1">Homodecamer; pentamer of dimers.</text>
</comment>
<comment type="subcellular location">
    <subcellularLocation>
        <location evidence="1">Cytoplasm</location>
    </subcellularLocation>
</comment>
<comment type="similarity">
    <text evidence="1">Belongs to the PanB family.</text>
</comment>